<comment type="function">
    <text evidence="1">Functions in the biosynthesis of branched-chain amino acids. Catalyzes the dehydration of (2R,3R)-2,3-dihydroxy-3-methylpentanoate (2,3-dihydroxy-3-methylvalerate) into 2-oxo-3-methylpentanoate (2-oxo-3-methylvalerate) and of (2R)-2,3-dihydroxy-3-methylbutanoate (2,3-dihydroxyisovalerate) into 2-oxo-3-methylbutanoate (2-oxoisovalerate), the penultimate precursor to L-isoleucine and L-valine, respectively.</text>
</comment>
<comment type="catalytic activity">
    <reaction evidence="1">
        <text>(2R)-2,3-dihydroxy-3-methylbutanoate = 3-methyl-2-oxobutanoate + H2O</text>
        <dbReference type="Rhea" id="RHEA:24809"/>
        <dbReference type="ChEBI" id="CHEBI:11851"/>
        <dbReference type="ChEBI" id="CHEBI:15377"/>
        <dbReference type="ChEBI" id="CHEBI:49072"/>
        <dbReference type="EC" id="4.2.1.9"/>
    </reaction>
    <physiologicalReaction direction="left-to-right" evidence="1">
        <dbReference type="Rhea" id="RHEA:24810"/>
    </physiologicalReaction>
</comment>
<comment type="catalytic activity">
    <reaction evidence="1">
        <text>(2R,3R)-2,3-dihydroxy-3-methylpentanoate = (S)-3-methyl-2-oxopentanoate + H2O</text>
        <dbReference type="Rhea" id="RHEA:27694"/>
        <dbReference type="ChEBI" id="CHEBI:15377"/>
        <dbReference type="ChEBI" id="CHEBI:35146"/>
        <dbReference type="ChEBI" id="CHEBI:49258"/>
        <dbReference type="EC" id="4.2.1.9"/>
    </reaction>
    <physiologicalReaction direction="left-to-right" evidence="1">
        <dbReference type="Rhea" id="RHEA:27695"/>
    </physiologicalReaction>
</comment>
<comment type="cofactor">
    <cofactor evidence="1">
        <name>[2Fe-2S] cluster</name>
        <dbReference type="ChEBI" id="CHEBI:190135"/>
    </cofactor>
    <text evidence="1">Binds 1 [2Fe-2S] cluster per subunit. This cluster acts as a Lewis acid cofactor.</text>
</comment>
<comment type="cofactor">
    <cofactor evidence="1">
        <name>Mg(2+)</name>
        <dbReference type="ChEBI" id="CHEBI:18420"/>
    </cofactor>
</comment>
<comment type="pathway">
    <text evidence="1">Amino-acid biosynthesis; L-isoleucine biosynthesis; L-isoleucine from 2-oxobutanoate: step 3/4.</text>
</comment>
<comment type="pathway">
    <text evidence="1">Amino-acid biosynthesis; L-valine biosynthesis; L-valine from pyruvate: step 3/4.</text>
</comment>
<comment type="subunit">
    <text evidence="1">Homodimer.</text>
</comment>
<comment type="similarity">
    <text evidence="1">Belongs to the IlvD/Edd family.</text>
</comment>
<accession>Q9KVW0</accession>
<gene>
    <name evidence="1" type="primary">ilvD</name>
    <name type="ordered locus">VC_0028</name>
</gene>
<proteinExistence type="inferred from homology"/>
<name>ILVD_VIBCH</name>
<keyword id="KW-0001">2Fe-2S</keyword>
<keyword id="KW-0028">Amino-acid biosynthesis</keyword>
<keyword id="KW-0100">Branched-chain amino acid biosynthesis</keyword>
<keyword id="KW-0408">Iron</keyword>
<keyword id="KW-0411">Iron-sulfur</keyword>
<keyword id="KW-0456">Lyase</keyword>
<keyword id="KW-0460">Magnesium</keyword>
<keyword id="KW-0479">Metal-binding</keyword>
<keyword id="KW-1185">Reference proteome</keyword>
<reference key="1">
    <citation type="journal article" date="2000" name="Nature">
        <title>DNA sequence of both chromosomes of the cholera pathogen Vibrio cholerae.</title>
        <authorList>
            <person name="Heidelberg J.F."/>
            <person name="Eisen J.A."/>
            <person name="Nelson W.C."/>
            <person name="Clayton R.A."/>
            <person name="Gwinn M.L."/>
            <person name="Dodson R.J."/>
            <person name="Haft D.H."/>
            <person name="Hickey E.K."/>
            <person name="Peterson J.D."/>
            <person name="Umayam L.A."/>
            <person name="Gill S.R."/>
            <person name="Nelson K.E."/>
            <person name="Read T.D."/>
            <person name="Tettelin H."/>
            <person name="Richardson D.L."/>
            <person name="Ermolaeva M.D."/>
            <person name="Vamathevan J.J."/>
            <person name="Bass S."/>
            <person name="Qin H."/>
            <person name="Dragoi I."/>
            <person name="Sellers P."/>
            <person name="McDonald L.A."/>
            <person name="Utterback T.R."/>
            <person name="Fleischmann R.D."/>
            <person name="Nierman W.C."/>
            <person name="White O."/>
            <person name="Salzberg S.L."/>
            <person name="Smith H.O."/>
            <person name="Colwell R.R."/>
            <person name="Mekalanos J.J."/>
            <person name="Venter J.C."/>
            <person name="Fraser C.M."/>
        </authorList>
    </citation>
    <scope>NUCLEOTIDE SEQUENCE [LARGE SCALE GENOMIC DNA]</scope>
    <source>
        <strain>ATCC 39315 / El Tor Inaba N16961</strain>
    </source>
</reference>
<protein>
    <recommendedName>
        <fullName evidence="1">Dihydroxy-acid dehydratase</fullName>
        <shortName evidence="1">DAD</shortName>
        <ecNumber evidence="1">4.2.1.9</ecNumber>
    </recommendedName>
</protein>
<feature type="chain" id="PRO_0000103525" description="Dihydroxy-acid dehydratase">
    <location>
        <begin position="1"/>
        <end position="613"/>
    </location>
</feature>
<feature type="active site" description="Proton acceptor" evidence="1">
    <location>
        <position position="517"/>
    </location>
</feature>
<feature type="binding site" evidence="1">
    <location>
        <position position="81"/>
    </location>
    <ligand>
        <name>Mg(2+)</name>
        <dbReference type="ChEBI" id="CHEBI:18420"/>
    </ligand>
</feature>
<feature type="binding site" evidence="1">
    <location>
        <position position="122"/>
    </location>
    <ligand>
        <name>[2Fe-2S] cluster</name>
        <dbReference type="ChEBI" id="CHEBI:190135"/>
    </ligand>
</feature>
<feature type="binding site" evidence="1">
    <location>
        <position position="123"/>
    </location>
    <ligand>
        <name>Mg(2+)</name>
        <dbReference type="ChEBI" id="CHEBI:18420"/>
    </ligand>
</feature>
<feature type="binding site" description="via carbamate group" evidence="1">
    <location>
        <position position="124"/>
    </location>
    <ligand>
        <name>Mg(2+)</name>
        <dbReference type="ChEBI" id="CHEBI:18420"/>
    </ligand>
</feature>
<feature type="binding site" evidence="1">
    <location>
        <position position="195"/>
    </location>
    <ligand>
        <name>[2Fe-2S] cluster</name>
        <dbReference type="ChEBI" id="CHEBI:190135"/>
    </ligand>
</feature>
<feature type="binding site" evidence="1">
    <location>
        <position position="491"/>
    </location>
    <ligand>
        <name>Mg(2+)</name>
        <dbReference type="ChEBI" id="CHEBI:18420"/>
    </ligand>
</feature>
<feature type="modified residue" description="N6-carboxylysine" evidence="1">
    <location>
        <position position="124"/>
    </location>
</feature>
<sequence>MPKYRSATTTHGRNMAGARALWRATGVKEEDFGKPIIAVVNSFTQFVPGHVHLKDLGQLVAREIEAAGGIAKEFNTIAVDDGIAMGHGGMLYSLPSRELIADSVEYMVNAHCADAMVCISNCDKITPGMLMAAMRLNIPAIFVSGGPMEAGKTKLSDQIIKLDLVDAMMQGADPKVSDAQSEQIERSACPTCGSCSGMFTANSMNCLTEALGLSQPGNGSLLATHADRKQLFLTAGQRIVELTKRYYEQDDASVLPRNIANKAAFENAIALDIAMGGSTNTVLHLLAAAQEGEVEFDMTDIDRMSRQVPHLCKVAPSTQKYHMEDVHRAGGVMGILGELQRAGLLKDQTRTVLGISLQEQLAQYDVKQTQDPAVHTMFRAGPAGIRTTQAFSQDCRWDTLDDDRQEGCIRDKAHAFSQDGGLAVLKGNLAIDGCIVKTAGVDESILKFRGPAVVYESQEDAVNGILGGQVKAGDVVVIRYEGPKGGPGMQEMLYPTTYLKSMGLGKQCALLTDGRFSGGTSGLSIGHASPEAANGGTIGLVRSGDSIAIDIPNRSITLEVSESELAARRAEQDKLGWKPVDRQRTVSLALKAYASMATSADKGAVRDKSKLEG</sequence>
<organism>
    <name type="scientific">Vibrio cholerae serotype O1 (strain ATCC 39315 / El Tor Inaba N16961)</name>
    <dbReference type="NCBI Taxonomy" id="243277"/>
    <lineage>
        <taxon>Bacteria</taxon>
        <taxon>Pseudomonadati</taxon>
        <taxon>Pseudomonadota</taxon>
        <taxon>Gammaproteobacteria</taxon>
        <taxon>Vibrionales</taxon>
        <taxon>Vibrionaceae</taxon>
        <taxon>Vibrio</taxon>
    </lineage>
</organism>
<dbReference type="EC" id="4.2.1.9" evidence="1"/>
<dbReference type="EMBL" id="AE003852">
    <property type="protein sequence ID" value="AAF93206.1"/>
    <property type="molecule type" value="Genomic_DNA"/>
</dbReference>
<dbReference type="PIR" id="F82374">
    <property type="entry name" value="F82374"/>
</dbReference>
<dbReference type="RefSeq" id="NP_229687.1">
    <property type="nucleotide sequence ID" value="NC_002505.1"/>
</dbReference>
<dbReference type="RefSeq" id="WP_001127457.1">
    <property type="nucleotide sequence ID" value="NZ_LT906614.1"/>
</dbReference>
<dbReference type="SMR" id="Q9KVW0"/>
<dbReference type="STRING" id="243277.VC_0028"/>
<dbReference type="DNASU" id="2612960"/>
<dbReference type="EnsemblBacteria" id="AAF93206">
    <property type="protein sequence ID" value="AAF93206"/>
    <property type="gene ID" value="VC_0028"/>
</dbReference>
<dbReference type="GeneID" id="69721184"/>
<dbReference type="KEGG" id="vch:VC_0028"/>
<dbReference type="PATRIC" id="fig|243277.26.peg.27"/>
<dbReference type="eggNOG" id="COG0129">
    <property type="taxonomic scope" value="Bacteria"/>
</dbReference>
<dbReference type="HOGENOM" id="CLU_014271_4_2_6"/>
<dbReference type="UniPathway" id="UPA00047">
    <property type="reaction ID" value="UER00057"/>
</dbReference>
<dbReference type="UniPathway" id="UPA00049">
    <property type="reaction ID" value="UER00061"/>
</dbReference>
<dbReference type="Proteomes" id="UP000000584">
    <property type="component" value="Chromosome 1"/>
</dbReference>
<dbReference type="GO" id="GO:0005829">
    <property type="term" value="C:cytosol"/>
    <property type="evidence" value="ECO:0000318"/>
    <property type="project" value="GO_Central"/>
</dbReference>
<dbReference type="GO" id="GO:0051537">
    <property type="term" value="F:2 iron, 2 sulfur cluster binding"/>
    <property type="evidence" value="ECO:0007669"/>
    <property type="project" value="UniProtKB-UniRule"/>
</dbReference>
<dbReference type="GO" id="GO:0004160">
    <property type="term" value="F:dihydroxy-acid dehydratase activity"/>
    <property type="evidence" value="ECO:0007669"/>
    <property type="project" value="UniProtKB-UniRule"/>
</dbReference>
<dbReference type="GO" id="GO:0016836">
    <property type="term" value="F:hydro-lyase activity"/>
    <property type="evidence" value="ECO:0000318"/>
    <property type="project" value="GO_Central"/>
</dbReference>
<dbReference type="GO" id="GO:0000287">
    <property type="term" value="F:magnesium ion binding"/>
    <property type="evidence" value="ECO:0007669"/>
    <property type="project" value="UniProtKB-UniRule"/>
</dbReference>
<dbReference type="GO" id="GO:0009097">
    <property type="term" value="P:isoleucine biosynthetic process"/>
    <property type="evidence" value="ECO:0007669"/>
    <property type="project" value="UniProtKB-UniRule"/>
</dbReference>
<dbReference type="GO" id="GO:0009099">
    <property type="term" value="P:L-valine biosynthetic process"/>
    <property type="evidence" value="ECO:0007669"/>
    <property type="project" value="UniProtKB-UniRule"/>
</dbReference>
<dbReference type="FunFam" id="3.50.30.80:FF:000001">
    <property type="entry name" value="Dihydroxy-acid dehydratase"/>
    <property type="match status" value="1"/>
</dbReference>
<dbReference type="Gene3D" id="3.50.30.80">
    <property type="entry name" value="IlvD/EDD C-terminal domain-like"/>
    <property type="match status" value="1"/>
</dbReference>
<dbReference type="HAMAP" id="MF_00012">
    <property type="entry name" value="IlvD"/>
    <property type="match status" value="1"/>
</dbReference>
<dbReference type="InterPro" id="IPR042096">
    <property type="entry name" value="Dihydro-acid_dehy_C"/>
</dbReference>
<dbReference type="InterPro" id="IPR004404">
    <property type="entry name" value="DihydroxyA_deHydtase"/>
</dbReference>
<dbReference type="InterPro" id="IPR020558">
    <property type="entry name" value="DiOHA_6PGluconate_deHydtase_CS"/>
</dbReference>
<dbReference type="InterPro" id="IPR056740">
    <property type="entry name" value="ILV_EDD_C"/>
</dbReference>
<dbReference type="InterPro" id="IPR000581">
    <property type="entry name" value="ILV_EDD_N"/>
</dbReference>
<dbReference type="InterPro" id="IPR037237">
    <property type="entry name" value="IlvD/EDD_N"/>
</dbReference>
<dbReference type="NCBIfam" id="TIGR00110">
    <property type="entry name" value="ilvD"/>
    <property type="match status" value="1"/>
</dbReference>
<dbReference type="NCBIfam" id="NF009103">
    <property type="entry name" value="PRK12448.1"/>
    <property type="match status" value="1"/>
</dbReference>
<dbReference type="PANTHER" id="PTHR43661">
    <property type="entry name" value="D-XYLONATE DEHYDRATASE"/>
    <property type="match status" value="1"/>
</dbReference>
<dbReference type="PANTHER" id="PTHR43661:SF3">
    <property type="entry name" value="D-XYLONATE DEHYDRATASE YAGF-RELATED"/>
    <property type="match status" value="1"/>
</dbReference>
<dbReference type="Pfam" id="PF24877">
    <property type="entry name" value="ILV_EDD_C"/>
    <property type="match status" value="1"/>
</dbReference>
<dbReference type="Pfam" id="PF00920">
    <property type="entry name" value="ILVD_EDD_N"/>
    <property type="match status" value="1"/>
</dbReference>
<dbReference type="SUPFAM" id="SSF143975">
    <property type="entry name" value="IlvD/EDD N-terminal domain-like"/>
    <property type="match status" value="1"/>
</dbReference>
<dbReference type="SUPFAM" id="SSF52016">
    <property type="entry name" value="LeuD/IlvD-like"/>
    <property type="match status" value="1"/>
</dbReference>
<dbReference type="PROSITE" id="PS00886">
    <property type="entry name" value="ILVD_EDD_1"/>
    <property type="match status" value="1"/>
</dbReference>
<dbReference type="PROSITE" id="PS00887">
    <property type="entry name" value="ILVD_EDD_2"/>
    <property type="match status" value="1"/>
</dbReference>
<evidence type="ECO:0000255" key="1">
    <source>
        <dbReference type="HAMAP-Rule" id="MF_00012"/>
    </source>
</evidence>